<feature type="transit peptide" description="Chloroplast" evidence="2">
    <location>
        <begin position="1"/>
        <end position="27"/>
    </location>
</feature>
<feature type="chain" id="PRO_0000302883" description="Calvin cycle protein CP12, chloroplastic">
    <location>
        <begin position="28"/>
        <end position="107"/>
    </location>
</feature>
<feature type="disulfide bond" evidence="3">
    <location>
        <begin position="50"/>
        <end position="58"/>
    </location>
</feature>
<feature type="disulfide bond" evidence="3">
    <location>
        <begin position="93"/>
        <end position="102"/>
    </location>
</feature>
<feature type="mutagenesis site" description="No impact on metal-ion binding." evidence="3">
    <original>H</original>
    <variation>L</variation>
    <location>
        <position position="74"/>
    </location>
</feature>
<accession>A6Q0K5</accession>
<accession>A8IZ71</accession>
<comment type="function">
    <text evidence="2">Acts as a linker essential in the assembly of a core complex of PRK/GAPDH. Coordinates the reversible inactivation of chloroplast enzymes GAPDH and PRK during darkness in photosynthetic tissues.</text>
</comment>
<comment type="subunit">
    <text evidence="1 2">Monomer (By similarity). Component of a complex that contains two dimers of PRK, two tetramers of GAPDH and CP12. CP12 associates with GAPDH, causing its conformation to change. This GAPDH/CP12 complex binds PRK to form a half-complex (one unit). This unit probably dimerizes due partially to interactions between the enzymes of each unit.</text>
</comment>
<comment type="interaction">
    <interactant intactId="EBI-9538486">
        <id>A6Q0K5</id>
    </interactant>
    <interactant intactId="EBI-9538536">
        <id>P50362</id>
        <label>GAPA</label>
    </interactant>
    <organismsDiffer>false</organismsDiffer>
    <experiments>2</experiments>
</comment>
<comment type="interaction">
    <interactant intactId="EBI-9538486">
        <id>A6Q0K5</id>
    </interactant>
    <interactant intactId="EBI-9538490">
        <id>P19824</id>
        <label>PRKA</label>
    </interactant>
    <organismsDiffer>false</organismsDiffer>
    <experiments>2</experiments>
</comment>
<comment type="subcellular location">
    <subcellularLocation>
        <location evidence="1">Plastid</location>
        <location evidence="1">Chloroplast</location>
    </subcellularLocation>
</comment>
<comment type="PTM">
    <text>Contains two disulfide bonds; only the oxidized protein, with two disulfide bonds, is active in complex formation.</text>
</comment>
<comment type="mass spectrometry"/>
<comment type="miscellaneous">
    <text evidence="5">Binds copper and nickel ions. Copper ions catalyze the oxidation of reduced thiol groups and thus promote formation of the disulfide bonds required for linker activity (PubMed:16259044).</text>
</comment>
<comment type="similarity">
    <text evidence="4">Belongs to the CP12 family.</text>
</comment>
<evidence type="ECO:0000250" key="1"/>
<evidence type="ECO:0000269" key="2">
    <source>
    </source>
</evidence>
<evidence type="ECO:0000269" key="3">
    <source>
    </source>
</evidence>
<evidence type="ECO:0000305" key="4"/>
<evidence type="ECO:0000305" key="5">
    <source>
    </source>
</evidence>
<evidence type="ECO:0000312" key="6">
    <source>
        <dbReference type="EMBL" id="CAO03469.1"/>
    </source>
</evidence>
<protein>
    <recommendedName>
        <fullName>Calvin cycle protein CP12, chloroplastic</fullName>
    </recommendedName>
    <alternativeName>
        <fullName>CP12 domain-containing protein</fullName>
    </alternativeName>
    <alternativeName>
        <fullName>Chloroplast protein 12</fullName>
    </alternativeName>
</protein>
<proteinExistence type="evidence at protein level"/>
<sequence>MMLTKSVVISRPAVRPVSTRRAVVVRASGQPAVDLNKKVQDAVKEAEDACAKGTSADCAVAWDTVEELSAAVSHKKDAVKADVTLTDPLEAFCKDAPDADECRVYED</sequence>
<reference key="1">
    <citation type="journal article" date="2007" name="Science">
        <title>The Chlamydomonas genome reveals the evolution of key animal and plant functions.</title>
        <authorList>
            <person name="Merchant S.S."/>
            <person name="Prochnik S.E."/>
            <person name="Vallon O."/>
            <person name="Harris E.H."/>
            <person name="Karpowicz S.J."/>
            <person name="Witman G.B."/>
            <person name="Terry A."/>
            <person name="Salamov A."/>
            <person name="Fritz-Laylin L.K."/>
            <person name="Marechal-Drouard L."/>
            <person name="Marshall W.F."/>
            <person name="Qu L.H."/>
            <person name="Nelson D.R."/>
            <person name="Sanderfoot A.A."/>
            <person name="Spalding M.H."/>
            <person name="Kapitonov V.V."/>
            <person name="Ren Q."/>
            <person name="Ferris P."/>
            <person name="Lindquist E."/>
            <person name="Shapiro H."/>
            <person name="Lucas S.M."/>
            <person name="Grimwood J."/>
            <person name="Schmutz J."/>
            <person name="Cardol P."/>
            <person name="Cerutti H."/>
            <person name="Chanfreau G."/>
            <person name="Chen C.L."/>
            <person name="Cognat V."/>
            <person name="Croft M.T."/>
            <person name="Dent R."/>
            <person name="Dutcher S."/>
            <person name="Fernandez E."/>
            <person name="Fukuzawa H."/>
            <person name="Gonzalez-Ballester D."/>
            <person name="Gonzalez-Halphen D."/>
            <person name="Hallmann A."/>
            <person name="Hanikenne M."/>
            <person name="Hippler M."/>
            <person name="Inwood W."/>
            <person name="Jabbari K."/>
            <person name="Kalanon M."/>
            <person name="Kuras R."/>
            <person name="Lefebvre P.A."/>
            <person name="Lemaire S.D."/>
            <person name="Lobanov A.V."/>
            <person name="Lohr M."/>
            <person name="Manuell A."/>
            <person name="Meier I."/>
            <person name="Mets L."/>
            <person name="Mittag M."/>
            <person name="Mittelmeier T."/>
            <person name="Moroney J.V."/>
            <person name="Moseley J."/>
            <person name="Napoli C."/>
            <person name="Nedelcu A.M."/>
            <person name="Niyogi K."/>
            <person name="Novoselov S.V."/>
            <person name="Paulsen I.T."/>
            <person name="Pazour G.J."/>
            <person name="Purton S."/>
            <person name="Ral J.P."/>
            <person name="Riano-Pachon D.M."/>
            <person name="Riekhof W."/>
            <person name="Rymarquis L."/>
            <person name="Schroda M."/>
            <person name="Stern D."/>
            <person name="Umen J."/>
            <person name="Willows R."/>
            <person name="Wilson N."/>
            <person name="Zimmer S.L."/>
            <person name="Allmer J."/>
            <person name="Balk J."/>
            <person name="Bisova K."/>
            <person name="Chen C.J."/>
            <person name="Elias M."/>
            <person name="Gendler K."/>
            <person name="Hauser C."/>
            <person name="Lamb M.R."/>
            <person name="Ledford H."/>
            <person name="Long J.C."/>
            <person name="Minagawa J."/>
            <person name="Page M.D."/>
            <person name="Pan J."/>
            <person name="Pootakham W."/>
            <person name="Roje S."/>
            <person name="Rose A."/>
            <person name="Stahlberg E."/>
            <person name="Terauchi A.M."/>
            <person name="Yang P."/>
            <person name="Ball S."/>
            <person name="Bowler C."/>
            <person name="Dieckmann C.L."/>
            <person name="Gladyshev V.N."/>
            <person name="Green P."/>
            <person name="Jorgensen R."/>
            <person name="Mayfield S."/>
            <person name="Mueller-Roeber B."/>
            <person name="Rajamani S."/>
            <person name="Sayre R.T."/>
            <person name="Brokstein P."/>
            <person name="Dubchak I."/>
            <person name="Goodstein D."/>
            <person name="Hornick L."/>
            <person name="Huang Y.W."/>
            <person name="Jhaveri J."/>
            <person name="Luo Y."/>
            <person name="Martinez D."/>
            <person name="Ngau W.C."/>
            <person name="Otillar B."/>
            <person name="Poliakov A."/>
            <person name="Porter A."/>
            <person name="Szajkowski L."/>
            <person name="Werner G."/>
            <person name="Zhou K."/>
            <person name="Grigoriev I.V."/>
            <person name="Rokhsar D.S."/>
            <person name="Grossman A.R."/>
        </authorList>
    </citation>
    <scope>NUCLEOTIDE SEQUENCE [LARGE SCALE GENOMIC DNA]</scope>
    <source>
        <strain>CC-503</strain>
    </source>
</reference>
<reference evidence="4 6" key="2">
    <citation type="journal article" date="2003" name="Biochemistry">
        <title>The small protein CP12: a protein linker for supramolecular complex assembly.</title>
        <authorList>
            <person name="Graciet E."/>
            <person name="Gans P."/>
            <person name="Wedel N."/>
            <person name="Lebreton S."/>
            <person name="Camadro J.-M."/>
            <person name="Gontero B."/>
        </authorList>
    </citation>
    <scope>NUCLEOTIDE SEQUENCE [GENOMIC DNA]</scope>
    <scope>PROTEIN SEQUENCE OF 28-32</scope>
    <scope>FUNCTION</scope>
    <scope>SUBUNIT</scope>
    <scope>STRUCTURE BY NMR</scope>
    <source>
        <strain evidence="6">cw15</strain>
    </source>
</reference>
<reference key="3">
    <citation type="journal article" date="2003" name="Eur. J. Biochem.">
        <title>Characterization of native and recombinant A4 glyceraldehyde 3-phosphate dehydrogenase. Kinetic evidence for conformation changes upon association with the small protein CP12.</title>
        <authorList>
            <person name="Graciet E."/>
            <person name="Lebreton S."/>
            <person name="Camadro J.-M."/>
            <person name="Gontero B."/>
        </authorList>
    </citation>
    <scope>INTERACTION WITH GAPDH</scope>
</reference>
<reference key="4">
    <citation type="journal article" date="2005" name="Rapid Commun. Mass Spectrom.">
        <title>Mass spectrometric analysis of the interactions between CP12, a chloroplast protein, and metal ions: a possible regulatory role within a PRK/GAPDH/CP12 complex.</title>
        <authorList>
            <person name="Delobel A."/>
            <person name="Graciet E."/>
            <person name="Andreescu S."/>
            <person name="Gontero B."/>
            <person name="Halgand F."/>
            <person name="Laprevote O."/>
        </authorList>
    </citation>
    <scope>MASS SPECTROMETRY</scope>
    <scope>DISULFIDE BOND</scope>
    <scope>MUTAGENESIS OF HIS-74</scope>
</reference>
<keyword id="KW-0113">Calvin cycle</keyword>
<keyword id="KW-0150">Chloroplast</keyword>
<keyword id="KW-0186">Copper</keyword>
<keyword id="KW-0903">Direct protein sequencing</keyword>
<keyword id="KW-1015">Disulfide bond</keyword>
<keyword id="KW-0533">Nickel</keyword>
<keyword id="KW-0934">Plastid</keyword>
<keyword id="KW-0809">Transit peptide</keyword>
<dbReference type="EMBL" id="DS496128">
    <property type="protein sequence ID" value="EDP02778.1"/>
    <property type="molecule type" value="Genomic_DNA"/>
</dbReference>
<dbReference type="EMBL" id="AM748786">
    <property type="protein sequence ID" value="CAO03469.1"/>
    <property type="molecule type" value="Genomic_DNA"/>
</dbReference>
<dbReference type="RefSeq" id="XP_001694345.1">
    <property type="nucleotide sequence ID" value="XM_001694293.1"/>
</dbReference>
<dbReference type="SASBDB" id="A6Q0K5"/>
<dbReference type="SMR" id="A6Q0K5"/>
<dbReference type="IntAct" id="A6Q0K5">
    <property type="interactions" value="2"/>
</dbReference>
<dbReference type="MINT" id="A6Q0K5"/>
<dbReference type="PaxDb" id="3055-EDP02778"/>
<dbReference type="ProMEX" id="A6Q0K5"/>
<dbReference type="GeneID" id="5719874"/>
<dbReference type="KEGG" id="cre:CHLRE_08g380250v5"/>
<dbReference type="eggNOG" id="ENOG502S5GB">
    <property type="taxonomic scope" value="Eukaryota"/>
</dbReference>
<dbReference type="HOGENOM" id="CLU_137076_2_1_1"/>
<dbReference type="OMA" id="CPWKTSY"/>
<dbReference type="OrthoDB" id="4362at2759"/>
<dbReference type="GO" id="GO:0009507">
    <property type="term" value="C:chloroplast"/>
    <property type="evidence" value="ECO:0000314"/>
    <property type="project" value="CAFA"/>
</dbReference>
<dbReference type="GO" id="GO:0032991">
    <property type="term" value="C:protein-containing complex"/>
    <property type="evidence" value="ECO:0000250"/>
    <property type="project" value="UniProtKB"/>
</dbReference>
<dbReference type="GO" id="GO:0099080">
    <property type="term" value="C:supramolecular complex"/>
    <property type="evidence" value="ECO:0000314"/>
    <property type="project" value="CAFA"/>
</dbReference>
<dbReference type="GO" id="GO:0005507">
    <property type="term" value="F:copper ion binding"/>
    <property type="evidence" value="ECO:0000314"/>
    <property type="project" value="UniProtKB"/>
</dbReference>
<dbReference type="GO" id="GO:0019899">
    <property type="term" value="F:enzyme binding"/>
    <property type="evidence" value="ECO:0000353"/>
    <property type="project" value="CAFA"/>
</dbReference>
<dbReference type="GO" id="GO:0016151">
    <property type="term" value="F:nickel cation binding"/>
    <property type="evidence" value="ECO:0000314"/>
    <property type="project" value="UniProtKB"/>
</dbReference>
<dbReference type="GO" id="GO:0080153">
    <property type="term" value="P:negative regulation of reductive pentose-phosphate cycle"/>
    <property type="evidence" value="ECO:0000250"/>
    <property type="project" value="UniProtKB"/>
</dbReference>
<dbReference type="GO" id="GO:0031334">
    <property type="term" value="P:positive regulation of protein-containing complex assembly"/>
    <property type="evidence" value="ECO:0000314"/>
    <property type="project" value="CAFA"/>
</dbReference>
<dbReference type="GO" id="GO:0019253">
    <property type="term" value="P:reductive pentose-phosphate cycle"/>
    <property type="evidence" value="ECO:0007669"/>
    <property type="project" value="UniProtKB-KW"/>
</dbReference>
<dbReference type="DisProt" id="DP00359"/>
<dbReference type="InterPro" id="IPR039314">
    <property type="entry name" value="CP12-like"/>
</dbReference>
<dbReference type="InterPro" id="IPR003823">
    <property type="entry name" value="CP12_dom"/>
</dbReference>
<dbReference type="PANTHER" id="PTHR33921">
    <property type="entry name" value="CALVIN CYCLE PROTEIN CP12-2, CHLOROPLASTIC"/>
    <property type="match status" value="1"/>
</dbReference>
<dbReference type="PANTHER" id="PTHR33921:SF15">
    <property type="entry name" value="CALVIN CYCLE PROTEIN CP12-2, CHLOROPLASTIC"/>
    <property type="match status" value="1"/>
</dbReference>
<dbReference type="Pfam" id="PF02672">
    <property type="entry name" value="CP12"/>
    <property type="match status" value="1"/>
</dbReference>
<dbReference type="SMART" id="SM01093">
    <property type="entry name" value="CP12"/>
    <property type="match status" value="1"/>
</dbReference>
<organism>
    <name type="scientific">Chlamydomonas reinhardtii</name>
    <name type="common">Chlamydomonas smithii</name>
    <dbReference type="NCBI Taxonomy" id="3055"/>
    <lineage>
        <taxon>Eukaryota</taxon>
        <taxon>Viridiplantae</taxon>
        <taxon>Chlorophyta</taxon>
        <taxon>core chlorophytes</taxon>
        <taxon>Chlorophyceae</taxon>
        <taxon>CS clade</taxon>
        <taxon>Chlamydomonadales</taxon>
        <taxon>Chlamydomonadaceae</taxon>
        <taxon>Chlamydomonas</taxon>
    </lineage>
</organism>
<name>CP12_CHLRE</name>
<gene>
    <name type="primary">CP12</name>
    <name type="ORF">CHLREDRAFT_148487</name>
</gene>